<keyword id="KW-0148">Chlorophyll</keyword>
<keyword id="KW-0150">Chloroplast</keyword>
<keyword id="KW-0157">Chromophore</keyword>
<keyword id="KW-0460">Magnesium</keyword>
<keyword id="KW-0472">Membrane</keyword>
<keyword id="KW-0479">Metal-binding</keyword>
<keyword id="KW-0597">Phosphoprotein</keyword>
<keyword id="KW-0602">Photosynthesis</keyword>
<keyword id="KW-0603">Photosystem I</keyword>
<keyword id="KW-0604">Photosystem II</keyword>
<keyword id="KW-0934">Plastid</keyword>
<keyword id="KW-1185">Reference proteome</keyword>
<keyword id="KW-0793">Thylakoid</keyword>
<keyword id="KW-0809">Transit peptide</keyword>
<keyword id="KW-0812">Transmembrane</keyword>
<keyword id="KW-1133">Transmembrane helix</keyword>
<comment type="function">
    <text>The light-harvesting complex (LHC) functions as a light receptor, it captures and delivers excitation energy to photosystems with which it is closely associated.</text>
</comment>
<comment type="cofactor">
    <text evidence="1">Binds at least 14 chlorophylls (8 Chl-a and 6 Chl-b) and carotenoids such as lutein and neoxanthin.</text>
</comment>
<comment type="subunit">
    <text>The LHC complex consists of chlorophyll a-b binding proteins.</text>
</comment>
<comment type="subcellular location">
    <subcellularLocation>
        <location>Plastid</location>
        <location>Chloroplast thylakoid membrane</location>
        <topology>Multi-pass membrane protein</topology>
    </subcellularLocation>
</comment>
<comment type="domain">
    <text>The N-terminus of the protein extends into the stroma where it is involved with adhesion of granal membranes and post-translational modifications; both are believed to mediate the distribution of excitation energy between photosystems I and II.</text>
</comment>
<comment type="PTM">
    <text evidence="1">Photoregulated by reversible phosphorylation of its threonine residues.</text>
</comment>
<comment type="similarity">
    <text evidence="6">Belongs to the light-harvesting chlorophyll a/b-binding (LHC) protein family.</text>
</comment>
<dbReference type="EMBL" id="M30621">
    <property type="protein sequence ID" value="AAA34156.1"/>
    <property type="molecule type" value="Genomic_DNA"/>
</dbReference>
<dbReference type="EMBL" id="M30622">
    <property type="protein sequence ID" value="AAA34157.1"/>
    <property type="molecule type" value="Genomic_DNA"/>
</dbReference>
<dbReference type="STRING" id="4081.P14277"/>
<dbReference type="InParanoid" id="P14277"/>
<dbReference type="Proteomes" id="UP000004994">
    <property type="component" value="Unplaced"/>
</dbReference>
<dbReference type="ExpressionAtlas" id="P14277">
    <property type="expression patterns" value="baseline and differential"/>
</dbReference>
<dbReference type="GO" id="GO:0009535">
    <property type="term" value="C:chloroplast thylakoid membrane"/>
    <property type="evidence" value="ECO:0000318"/>
    <property type="project" value="GO_Central"/>
</dbReference>
<dbReference type="GO" id="GO:0009522">
    <property type="term" value="C:photosystem I"/>
    <property type="evidence" value="ECO:0007669"/>
    <property type="project" value="UniProtKB-KW"/>
</dbReference>
<dbReference type="GO" id="GO:0009523">
    <property type="term" value="C:photosystem II"/>
    <property type="evidence" value="ECO:0007669"/>
    <property type="project" value="UniProtKB-KW"/>
</dbReference>
<dbReference type="GO" id="GO:0016168">
    <property type="term" value="F:chlorophyll binding"/>
    <property type="evidence" value="ECO:0007669"/>
    <property type="project" value="UniProtKB-KW"/>
</dbReference>
<dbReference type="GO" id="GO:0046872">
    <property type="term" value="F:metal ion binding"/>
    <property type="evidence" value="ECO:0007669"/>
    <property type="project" value="UniProtKB-KW"/>
</dbReference>
<dbReference type="GO" id="GO:0009768">
    <property type="term" value="P:photosynthesis, light harvesting in photosystem I"/>
    <property type="evidence" value="ECO:0000318"/>
    <property type="project" value="GO_Central"/>
</dbReference>
<dbReference type="GO" id="GO:0009416">
    <property type="term" value="P:response to light stimulus"/>
    <property type="evidence" value="ECO:0000318"/>
    <property type="project" value="GO_Central"/>
</dbReference>
<dbReference type="FunFam" id="1.10.3460.10:FF:000013">
    <property type="entry name" value="Chlorophyll a-b binding protein 3A, chloroplastic"/>
    <property type="match status" value="1"/>
</dbReference>
<dbReference type="Gene3D" id="1.10.3460.10">
    <property type="entry name" value="Chlorophyll a/b binding protein domain"/>
    <property type="match status" value="1"/>
</dbReference>
<dbReference type="InterPro" id="IPR001344">
    <property type="entry name" value="Chloro_AB-bd_pln"/>
</dbReference>
<dbReference type="InterPro" id="IPR022796">
    <property type="entry name" value="Chloroa_b-bind"/>
</dbReference>
<dbReference type="PANTHER" id="PTHR21649">
    <property type="entry name" value="CHLOROPHYLL A/B BINDING PROTEIN"/>
    <property type="match status" value="1"/>
</dbReference>
<dbReference type="Pfam" id="PF00504">
    <property type="entry name" value="Chloroa_b-bind"/>
    <property type="match status" value="1"/>
</dbReference>
<dbReference type="SUPFAM" id="SSF103511">
    <property type="entry name" value="Chlorophyll a-b binding protein"/>
    <property type="match status" value="1"/>
</dbReference>
<gene>
    <name type="primary">CAB3B</name>
</gene>
<organism>
    <name type="scientific">Solanum lycopersicum</name>
    <name type="common">Tomato</name>
    <name type="synonym">Lycopersicon esculentum</name>
    <dbReference type="NCBI Taxonomy" id="4081"/>
    <lineage>
        <taxon>Eukaryota</taxon>
        <taxon>Viridiplantae</taxon>
        <taxon>Streptophyta</taxon>
        <taxon>Embryophyta</taxon>
        <taxon>Tracheophyta</taxon>
        <taxon>Spermatophyta</taxon>
        <taxon>Magnoliopsida</taxon>
        <taxon>eudicotyledons</taxon>
        <taxon>Gunneridae</taxon>
        <taxon>Pentapetalae</taxon>
        <taxon>asterids</taxon>
        <taxon>lamiids</taxon>
        <taxon>Solanales</taxon>
        <taxon>Solanaceae</taxon>
        <taxon>Solanoideae</taxon>
        <taxon>Solaneae</taxon>
        <taxon>Solanum</taxon>
        <taxon>Solanum subgen. Lycopersicon</taxon>
    </lineage>
</organism>
<proteinExistence type="inferred from homology"/>
<reference key="1">
    <citation type="journal article" date="1985" name="Gene">
        <title>Molecular characterization and genetic mapping of two clusters of genes encoding chlorophyll a/b-binding proteins in Lycopersicon esculentum (tomato).</title>
        <authorList>
            <person name="Pichersky E."/>
            <person name="Bernatzky R."/>
            <person name="Tanksley S.D."/>
            <person name="Breidenbach R.B."/>
            <person name="Kausch A.P."/>
            <person name="Cashmore A.R."/>
        </authorList>
    </citation>
    <scope>NUCLEOTIDE SEQUENCE [GENOMIC DNA]</scope>
    <source>
        <strain>cv. T6</strain>
    </source>
</reference>
<evidence type="ECO:0000250" key="1"/>
<evidence type="ECO:0000250" key="2">
    <source>
        <dbReference type="UniProtKB" id="P07371"/>
    </source>
</evidence>
<evidence type="ECO:0000250" key="3">
    <source>
        <dbReference type="UniProtKB" id="P12333"/>
    </source>
</evidence>
<evidence type="ECO:0000255" key="4"/>
<evidence type="ECO:0000256" key="5">
    <source>
        <dbReference type="SAM" id="MobiDB-lite"/>
    </source>
</evidence>
<evidence type="ECO:0000305" key="6"/>
<accession>P14277</accession>
<protein>
    <recommendedName>
        <fullName>Chlorophyll a-b binding protein 3B, chloroplastic</fullName>
    </recommendedName>
    <alternativeName>
        <fullName>LHCII type I CAB-3B</fullName>
        <shortName>LHCP</shortName>
    </alternativeName>
</protein>
<sequence length="267" mass="28559">MAASTMALSSSTFAGKAVKLSPSSSEISGNGRITMRKTAAKPKPASSGSPWXXXXXXXXXXXXXXXXXXXXXXXXXXXXXXXXXXXXXXXXXXXXXXXXXXXXXXXXXXXXXXXXXXXXXXXXXXXXXXXXXXXXXXXXXXXXXXXXXXXXSLVHAQSILAIWACQVVLMGAVEGYRIAGGPLGEVVDPLYPGGSFDPLGLAEDPEAFAELKVKEIKNGRLAMFSMFGFFVQAIVTGKGPLENLADHIADPVNNNAWAFATNFVPGK</sequence>
<feature type="transit peptide" description="Chloroplast">
    <location>
        <begin position="1"/>
        <end position="34"/>
    </location>
</feature>
<feature type="chain" id="PRO_0000003666" description="Chlorophyll a-b binding protein 3B, chloroplastic">
    <location>
        <begin position="35"/>
        <end position="267"/>
    </location>
</feature>
<feature type="transmembrane region" description="Helical" evidence="4">
    <location>
        <begin position="153"/>
        <end position="173"/>
    </location>
</feature>
<feature type="transmembrane region" description="Helical" evidence="4">
    <location>
        <begin position="221"/>
        <end position="241"/>
    </location>
</feature>
<feature type="region of interest" description="Disordered" evidence="5">
    <location>
        <begin position="19"/>
        <end position="52"/>
    </location>
</feature>
<feature type="binding site" description="axial binding residue" evidence="3">
    <location>
        <position position="154"/>
    </location>
    <ligand>
        <name>chlorophyll b</name>
        <dbReference type="ChEBI" id="CHEBI:61721"/>
        <label>2</label>
    </ligand>
    <ligandPart>
        <name>Mg</name>
        <dbReference type="ChEBI" id="CHEBI:25107"/>
    </ligandPart>
</feature>
<feature type="binding site" evidence="1">
    <location>
        <position position="158"/>
    </location>
    <ligand>
        <name>chlorophyll b</name>
        <dbReference type="ChEBI" id="CHEBI:61721"/>
        <label>3</label>
    </ligand>
</feature>
<feature type="binding site" evidence="1">
    <location>
        <position position="166"/>
    </location>
    <ligand>
        <name>chlorophyll b</name>
        <dbReference type="ChEBI" id="CHEBI:61721"/>
        <label>4</label>
    </ligand>
</feature>
<feature type="binding site" evidence="2">
    <location>
        <position position="166"/>
    </location>
    <ligand>
        <name>chlorophyll b</name>
        <dbReference type="ChEBI" id="CHEBI:61721"/>
        <label>5</label>
    </ligand>
</feature>
<feature type="binding site" description="axial binding residue" evidence="3">
    <location>
        <position position="174"/>
    </location>
    <ligand>
        <name>chlorophyll b</name>
        <dbReference type="ChEBI" id="CHEBI:61721"/>
        <label>3</label>
    </ligand>
    <ligandPart>
        <name>Mg</name>
        <dbReference type="ChEBI" id="CHEBI:25107"/>
    </ligandPart>
</feature>
<feature type="binding site" evidence="1">
    <location>
        <position position="177"/>
    </location>
    <ligand>
        <name>chlorophyll b</name>
        <dbReference type="ChEBI" id="CHEBI:61721"/>
        <label>4</label>
    </ligand>
</feature>
<feature type="binding site" evidence="1">
    <location>
        <position position="183"/>
    </location>
    <ligand>
        <name>chlorophyll b</name>
        <dbReference type="ChEBI" id="CHEBI:61721"/>
        <label>2</label>
    </ligand>
</feature>
<feature type="binding site" evidence="1">
    <location>
        <position position="214"/>
    </location>
    <ligand>
        <name>chlorophyll a</name>
        <dbReference type="ChEBI" id="CHEBI:58416"/>
        <label>5</label>
    </ligand>
</feature>
<feature type="binding site" description="axial binding residue" evidence="3">
    <location>
        <position position="215"/>
    </location>
    <ligand>
        <name>chlorophyll a</name>
        <dbReference type="ChEBI" id="CHEBI:58416"/>
        <label>3</label>
    </ligand>
    <ligandPart>
        <name>Mg</name>
        <dbReference type="ChEBI" id="CHEBI:25107"/>
    </ligandPart>
</feature>
<feature type="binding site" description="axial binding residue" evidence="3">
    <location>
        <position position="218"/>
    </location>
    <ligand>
        <name>chlorophyll a</name>
        <dbReference type="ChEBI" id="CHEBI:58416"/>
        <label>4</label>
    </ligand>
    <ligandPart>
        <name>Mg</name>
        <dbReference type="ChEBI" id="CHEBI:25107"/>
    </ligandPart>
</feature>
<feature type="binding site" evidence="1">
    <location>
        <position position="220"/>
    </location>
    <ligand>
        <name>chlorophyll a</name>
        <dbReference type="ChEBI" id="CHEBI:58416"/>
        <label>1</label>
    </ligand>
</feature>
<feature type="binding site" description="axial binding residue" evidence="3">
    <location>
        <position position="232"/>
    </location>
    <ligand>
        <name>chlorophyll a</name>
        <dbReference type="ChEBI" id="CHEBI:58416"/>
        <label>5</label>
    </ligand>
    <ligandPart>
        <name>Mg</name>
        <dbReference type="ChEBI" id="CHEBI:25107"/>
    </ligandPart>
</feature>
<feature type="binding site" description="axial binding residue" evidence="3">
    <location>
        <position position="247"/>
    </location>
    <ligand>
        <name>chlorophyll a</name>
        <dbReference type="ChEBI" id="CHEBI:58416"/>
        <label>6</label>
    </ligand>
    <ligandPart>
        <name>Mg</name>
        <dbReference type="ChEBI" id="CHEBI:25107"/>
    </ligandPart>
</feature>
<feature type="binding site" evidence="1">
    <location>
        <position position="256"/>
    </location>
    <ligand>
        <name>chlorophyll a</name>
        <dbReference type="ChEBI" id="CHEBI:58416"/>
        <label>6</label>
    </ligand>
</feature>
<feature type="binding site" evidence="1">
    <location>
        <position position="263"/>
    </location>
    <ligand>
        <name>chlorophyll b</name>
        <dbReference type="ChEBI" id="CHEBI:61721"/>
        <label>5</label>
    </ligand>
</feature>
<name>CB2F_SOLLC</name>